<proteinExistence type="evidence at protein level"/>
<feature type="chain" id="PRO_0000097513" description="RNA-directed DNA polymerase from mobile element jockey">
    <location>
        <begin position="1"/>
        <end position="916"/>
    </location>
</feature>
<feature type="domain" description="Reverse transcriptase" evidence="1">
    <location>
        <begin position="483"/>
        <end position="757"/>
    </location>
</feature>
<feature type="region of interest" description="Disordered" evidence="2">
    <location>
        <begin position="890"/>
        <end position="916"/>
    </location>
</feature>
<feature type="compositionally biased region" description="Basic residues" evidence="2">
    <location>
        <begin position="896"/>
        <end position="906"/>
    </location>
</feature>
<feature type="compositionally biased region" description="Basic and acidic residues" evidence="2">
    <location>
        <begin position="907"/>
        <end position="916"/>
    </location>
</feature>
<dbReference type="EC" id="2.7.7.49"/>
<dbReference type="EMBL" id="M38437">
    <property type="protein sequence ID" value="AAA28649.1"/>
    <property type="molecule type" value="Genomic_DNA"/>
</dbReference>
<dbReference type="PIR" id="A38418">
    <property type="entry name" value="A38418"/>
</dbReference>
<dbReference type="SMR" id="P21329"/>
<dbReference type="FlyBase" id="FBgn0019258">
    <property type="gene designation" value="Dfun\jockey\pol"/>
</dbReference>
<dbReference type="GO" id="GO:0003964">
    <property type="term" value="F:RNA-directed DNA polymerase activity"/>
    <property type="evidence" value="ECO:0007669"/>
    <property type="project" value="UniProtKB-KW"/>
</dbReference>
<dbReference type="CDD" id="cd01650">
    <property type="entry name" value="RT_nLTR_like"/>
    <property type="match status" value="1"/>
</dbReference>
<dbReference type="Gene3D" id="3.60.10.10">
    <property type="entry name" value="Endonuclease/exonuclease/phosphatase"/>
    <property type="match status" value="1"/>
</dbReference>
<dbReference type="InterPro" id="IPR043502">
    <property type="entry name" value="DNA/RNA_pol_sf"/>
</dbReference>
<dbReference type="InterPro" id="IPR036691">
    <property type="entry name" value="Endo/exonu/phosph_ase_sf"/>
</dbReference>
<dbReference type="InterPro" id="IPR005135">
    <property type="entry name" value="Endo/exonuclease/phosphatase"/>
</dbReference>
<dbReference type="InterPro" id="IPR052560">
    <property type="entry name" value="RdDP_mobile_element"/>
</dbReference>
<dbReference type="InterPro" id="IPR000477">
    <property type="entry name" value="RT_dom"/>
</dbReference>
<dbReference type="PANTHER" id="PTHR36688">
    <property type="entry name" value="ENDO/EXONUCLEASE/PHOSPHATASE DOMAIN-CONTAINING PROTEIN"/>
    <property type="match status" value="1"/>
</dbReference>
<dbReference type="PANTHER" id="PTHR36688:SF2">
    <property type="entry name" value="ENDONUCLEASE_EXONUCLEASE_PHOSPHATASE DOMAIN-CONTAINING PROTEIN"/>
    <property type="match status" value="1"/>
</dbReference>
<dbReference type="Pfam" id="PF03372">
    <property type="entry name" value="Exo_endo_phos"/>
    <property type="match status" value="1"/>
</dbReference>
<dbReference type="Pfam" id="PF00078">
    <property type="entry name" value="RVT_1"/>
    <property type="match status" value="1"/>
</dbReference>
<dbReference type="SUPFAM" id="SSF56672">
    <property type="entry name" value="DNA/RNA polymerases"/>
    <property type="match status" value="1"/>
</dbReference>
<dbReference type="SUPFAM" id="SSF56219">
    <property type="entry name" value="DNase I-like"/>
    <property type="match status" value="1"/>
</dbReference>
<dbReference type="PROSITE" id="PS50878">
    <property type="entry name" value="RT_POL"/>
    <property type="match status" value="1"/>
</dbReference>
<sequence length="916" mass="103470">MTQPTIKIGLWMHRGLTRGSEELRLFLSVHNIDVMLVTESHMREGQRIFLPGYSTYHVFHPSGNSRGGASVIVRSSISHSPQPPISTNDRQIAYIQLQTAEGPVVLAAVYLPPRERWIRAEFESLFAVLGNKFIAGGDYNAKHAWWGNSRACARGKVLQEVVANGQYQILATGEPTFYSYNPLVSPSALDFFVVNGYDMRRLNVQTLHELSSDHTPLLADLHAMPINKPPRSCLLARGADIERFKAYLTQHIDLSVGIQGTDDIDNAIDSFMDILKRAAIRSAPSHQQNVESSRQLQLPPIVASLIRLKRKVRREYARTGDARIQQIHSRLANRLHKVLNRRKQSQIDNLLENLDTDGSTNFSLWRITKRYKTQATPNSAIRNPAGGWCRTSREKTEVFANHLEQRFKALAFAPESHSLMVAESLQTPFQMALPADPVTLEEVKELVSKLKPKKAPGEDLLDNRTIRLLPDQALLYLVLIFNSILRVGYFPKARPTASIIMILKPGKQPLDVDSYRPTSLLPSLGKMLERLILNRILTSEEVTRAIPKFQFGFRLQHGTPEQLHRVVNFALEALEKKEYAGSCFLDIQQAFDRVWHPGLLYKAKSLLSPQLFQLIKSFWEGRKFSVTADGCRSSVKFIEAGVPQGSVLGPTLYSIFTADMPNQNAVTGLAEGEVLIATYADDIAVLTKSTCIVEATDALQEYLDAFQEWAVKWNVSINAGKCANVTFTNAIRDCPGVTINGSLLSHTHEYKYLGVILDRSLTFRRHITSLQHSFRTRITKMNWLLAARNKLSLDNKVKIYKCIVAPGLFYAIQVYGIAARTHLNKIRVLQAKMLRKISGAPWYMRTRDIECDLKVPKIGDKIREVAKKYHERLDSHPNSLARRLGVAAQRSASPRSRVRRRLKRHHPQDLLDRALT</sequence>
<comment type="catalytic activity">
    <reaction evidence="1">
        <text>DNA(n) + a 2'-deoxyribonucleoside 5'-triphosphate = DNA(n+1) + diphosphate</text>
        <dbReference type="Rhea" id="RHEA:22508"/>
        <dbReference type="Rhea" id="RHEA-COMP:17339"/>
        <dbReference type="Rhea" id="RHEA-COMP:17340"/>
        <dbReference type="ChEBI" id="CHEBI:33019"/>
        <dbReference type="ChEBI" id="CHEBI:61560"/>
        <dbReference type="ChEBI" id="CHEBI:173112"/>
        <dbReference type="EC" id="2.7.7.49"/>
    </reaction>
</comment>
<comment type="cofactor">
    <cofactor>
        <name>Mg(2+)</name>
        <dbReference type="ChEBI" id="CHEBI:18420"/>
    </cofactor>
</comment>
<comment type="cofactor">
    <cofactor>
        <name>Mn(2+)</name>
        <dbReference type="ChEBI" id="CHEBI:29035"/>
    </cofactor>
</comment>
<comment type="activity regulation">
    <text>Inactivated by sulphydryl reagent.</text>
</comment>
<comment type="biophysicochemical properties">
    <temperatureDependence>
        <text>Optimum temperature is 26 degrees Celsius.</text>
    </temperatureDependence>
</comment>
<comment type="miscellaneous">
    <text>Prefers poly(rC) and poly(rA) as template and activated DNA is not effective.</text>
</comment>
<gene>
    <name type="primary">jockey\pol</name>
    <name type="synonym">pol</name>
</gene>
<evidence type="ECO:0000255" key="1">
    <source>
        <dbReference type="PROSITE-ProRule" id="PRU00405"/>
    </source>
</evidence>
<evidence type="ECO:0000256" key="2">
    <source>
        <dbReference type="SAM" id="MobiDB-lite"/>
    </source>
</evidence>
<keyword id="KW-0548">Nucleotidyltransferase</keyword>
<keyword id="KW-0695">RNA-directed DNA polymerase</keyword>
<keyword id="KW-0808">Transferase</keyword>
<keyword id="KW-0814">Transposable element</keyword>
<reference key="1">
    <citation type="journal article" date="1990" name="Proc. Natl. Acad. Sci. U.S.A.">
        <title>Evidence for horizontal transmission of the mobile element jockey between distant Drosophila species.</title>
        <authorList>
            <person name="Mizrokhi L.J."/>
            <person name="Mazo A.M."/>
        </authorList>
    </citation>
    <scope>NUCLEOTIDE SEQUENCE [GENOMIC DNA]</scope>
    <source>
        <strain>1911.1</strain>
    </source>
</reference>
<name>RTJK_DROFU</name>
<accession>P21329</accession>
<organism>
    <name type="scientific">Drosophila funebris</name>
    <name type="common">Fruit fly</name>
    <dbReference type="NCBI Taxonomy" id="7221"/>
    <lineage>
        <taxon>Eukaryota</taxon>
        <taxon>Metazoa</taxon>
        <taxon>Ecdysozoa</taxon>
        <taxon>Arthropoda</taxon>
        <taxon>Hexapoda</taxon>
        <taxon>Insecta</taxon>
        <taxon>Pterygota</taxon>
        <taxon>Neoptera</taxon>
        <taxon>Endopterygota</taxon>
        <taxon>Diptera</taxon>
        <taxon>Brachycera</taxon>
        <taxon>Muscomorpha</taxon>
        <taxon>Ephydroidea</taxon>
        <taxon>Drosophilidae</taxon>
        <taxon>Drosophila</taxon>
    </lineage>
</organism>
<protein>
    <recommendedName>
        <fullName>RNA-directed DNA polymerase from mobile element jockey</fullName>
        <ecNumber>2.7.7.49</ecNumber>
    </recommendedName>
    <alternativeName>
        <fullName>Reverse transcriptase</fullName>
    </alternativeName>
</protein>